<accession>Q6NFC2</accession>
<dbReference type="EC" id="4.6.1.12" evidence="1"/>
<dbReference type="EMBL" id="BX248359">
    <property type="protein sequence ID" value="CAE50503.1"/>
    <property type="molecule type" value="Genomic_DNA"/>
</dbReference>
<dbReference type="RefSeq" id="WP_010935474.1">
    <property type="nucleotide sequence ID" value="NC_002935.2"/>
</dbReference>
<dbReference type="SMR" id="Q6NFC2"/>
<dbReference type="STRING" id="257309.DIP1972"/>
<dbReference type="KEGG" id="cdi:DIP1972"/>
<dbReference type="HOGENOM" id="CLU_084630_1_0_11"/>
<dbReference type="UniPathway" id="UPA00056">
    <property type="reaction ID" value="UER00095"/>
</dbReference>
<dbReference type="Proteomes" id="UP000002198">
    <property type="component" value="Chromosome"/>
</dbReference>
<dbReference type="GO" id="GO:0008685">
    <property type="term" value="F:2-C-methyl-D-erythritol 2,4-cyclodiphosphate synthase activity"/>
    <property type="evidence" value="ECO:0007669"/>
    <property type="project" value="UniProtKB-UniRule"/>
</dbReference>
<dbReference type="GO" id="GO:0046872">
    <property type="term" value="F:metal ion binding"/>
    <property type="evidence" value="ECO:0007669"/>
    <property type="project" value="UniProtKB-KW"/>
</dbReference>
<dbReference type="GO" id="GO:0019288">
    <property type="term" value="P:isopentenyl diphosphate biosynthetic process, methylerythritol 4-phosphate pathway"/>
    <property type="evidence" value="ECO:0007669"/>
    <property type="project" value="UniProtKB-UniRule"/>
</dbReference>
<dbReference type="GO" id="GO:0016114">
    <property type="term" value="P:terpenoid biosynthetic process"/>
    <property type="evidence" value="ECO:0007669"/>
    <property type="project" value="InterPro"/>
</dbReference>
<dbReference type="CDD" id="cd00554">
    <property type="entry name" value="MECDP_synthase"/>
    <property type="match status" value="1"/>
</dbReference>
<dbReference type="FunFam" id="3.30.1330.50:FF:000003">
    <property type="entry name" value="2-C-methyl-D-erythritol 2,4-cyclodiphosphate synthase"/>
    <property type="match status" value="1"/>
</dbReference>
<dbReference type="Gene3D" id="3.30.1330.50">
    <property type="entry name" value="2-C-methyl-D-erythritol 2,4-cyclodiphosphate synthase"/>
    <property type="match status" value="1"/>
</dbReference>
<dbReference type="HAMAP" id="MF_00107">
    <property type="entry name" value="IspF"/>
    <property type="match status" value="1"/>
</dbReference>
<dbReference type="InterPro" id="IPR003526">
    <property type="entry name" value="MECDP_synthase"/>
</dbReference>
<dbReference type="InterPro" id="IPR020555">
    <property type="entry name" value="MECDP_synthase_CS"/>
</dbReference>
<dbReference type="InterPro" id="IPR036571">
    <property type="entry name" value="MECDP_synthase_sf"/>
</dbReference>
<dbReference type="NCBIfam" id="TIGR00151">
    <property type="entry name" value="ispF"/>
    <property type="match status" value="1"/>
</dbReference>
<dbReference type="PANTHER" id="PTHR43181">
    <property type="entry name" value="2-C-METHYL-D-ERYTHRITOL 2,4-CYCLODIPHOSPHATE SYNTHASE, CHLOROPLASTIC"/>
    <property type="match status" value="1"/>
</dbReference>
<dbReference type="PANTHER" id="PTHR43181:SF1">
    <property type="entry name" value="2-C-METHYL-D-ERYTHRITOL 2,4-CYCLODIPHOSPHATE SYNTHASE, CHLOROPLASTIC"/>
    <property type="match status" value="1"/>
</dbReference>
<dbReference type="Pfam" id="PF02542">
    <property type="entry name" value="YgbB"/>
    <property type="match status" value="1"/>
</dbReference>
<dbReference type="SUPFAM" id="SSF69765">
    <property type="entry name" value="IpsF-like"/>
    <property type="match status" value="1"/>
</dbReference>
<dbReference type="PROSITE" id="PS01350">
    <property type="entry name" value="ISPF"/>
    <property type="match status" value="1"/>
</dbReference>
<organism>
    <name type="scientific">Corynebacterium diphtheriae (strain ATCC 700971 / NCTC 13129 / Biotype gravis)</name>
    <dbReference type="NCBI Taxonomy" id="257309"/>
    <lineage>
        <taxon>Bacteria</taxon>
        <taxon>Bacillati</taxon>
        <taxon>Actinomycetota</taxon>
        <taxon>Actinomycetes</taxon>
        <taxon>Mycobacteriales</taxon>
        <taxon>Corynebacteriaceae</taxon>
        <taxon>Corynebacterium</taxon>
    </lineage>
</organism>
<gene>
    <name evidence="1" type="primary">ispF</name>
    <name type="ordered locus">DIP1972</name>
</gene>
<evidence type="ECO:0000255" key="1">
    <source>
        <dbReference type="HAMAP-Rule" id="MF_00107"/>
    </source>
</evidence>
<feature type="chain" id="PRO_0000189460" description="2-C-methyl-D-erythritol 2,4-cyclodiphosphate synthase">
    <location>
        <begin position="1"/>
        <end position="160"/>
    </location>
</feature>
<feature type="binding site" evidence="1">
    <location>
        <begin position="15"/>
        <end position="17"/>
    </location>
    <ligand>
        <name>4-CDP-2-C-methyl-D-erythritol 2-phosphate</name>
        <dbReference type="ChEBI" id="CHEBI:57919"/>
    </ligand>
</feature>
<feature type="binding site" evidence="1">
    <location>
        <position position="15"/>
    </location>
    <ligand>
        <name>a divalent metal cation</name>
        <dbReference type="ChEBI" id="CHEBI:60240"/>
    </ligand>
</feature>
<feature type="binding site" evidence="1">
    <location>
        <position position="17"/>
    </location>
    <ligand>
        <name>a divalent metal cation</name>
        <dbReference type="ChEBI" id="CHEBI:60240"/>
    </ligand>
</feature>
<feature type="binding site" evidence="1">
    <location>
        <begin position="41"/>
        <end position="42"/>
    </location>
    <ligand>
        <name>4-CDP-2-C-methyl-D-erythritol 2-phosphate</name>
        <dbReference type="ChEBI" id="CHEBI:57919"/>
    </ligand>
</feature>
<feature type="binding site" evidence="1">
    <location>
        <position position="49"/>
    </location>
    <ligand>
        <name>a divalent metal cation</name>
        <dbReference type="ChEBI" id="CHEBI:60240"/>
    </ligand>
</feature>
<feature type="binding site" evidence="1">
    <location>
        <begin position="63"/>
        <end position="65"/>
    </location>
    <ligand>
        <name>4-CDP-2-C-methyl-D-erythritol 2-phosphate</name>
        <dbReference type="ChEBI" id="CHEBI:57919"/>
    </ligand>
</feature>
<feature type="binding site" evidence="1">
    <location>
        <begin position="136"/>
        <end position="139"/>
    </location>
    <ligand>
        <name>4-CDP-2-C-methyl-D-erythritol 2-phosphate</name>
        <dbReference type="ChEBI" id="CHEBI:57919"/>
    </ligand>
</feature>
<feature type="binding site" evidence="1">
    <location>
        <position position="143"/>
    </location>
    <ligand>
        <name>4-CDP-2-C-methyl-D-erythritol 2-phosphate</name>
        <dbReference type="ChEBI" id="CHEBI:57919"/>
    </ligand>
</feature>
<feature type="binding site" evidence="1">
    <location>
        <position position="146"/>
    </location>
    <ligand>
        <name>4-CDP-2-C-methyl-D-erythritol 2-phosphate</name>
        <dbReference type="ChEBI" id="CHEBI:57919"/>
    </ligand>
</feature>
<feature type="site" description="Transition state stabilizer" evidence="1">
    <location>
        <position position="41"/>
    </location>
</feature>
<feature type="site" description="Transition state stabilizer" evidence="1">
    <location>
        <position position="137"/>
    </location>
</feature>
<reference key="1">
    <citation type="journal article" date="2003" name="Nucleic Acids Res.">
        <title>The complete genome sequence and analysis of Corynebacterium diphtheriae NCTC13129.</title>
        <authorList>
            <person name="Cerdeno-Tarraga A.-M."/>
            <person name="Efstratiou A."/>
            <person name="Dover L.G."/>
            <person name="Holden M.T.G."/>
            <person name="Pallen M.J."/>
            <person name="Bentley S.D."/>
            <person name="Besra G.S."/>
            <person name="Churcher C.M."/>
            <person name="James K.D."/>
            <person name="De Zoysa A."/>
            <person name="Chillingworth T."/>
            <person name="Cronin A."/>
            <person name="Dowd L."/>
            <person name="Feltwell T."/>
            <person name="Hamlin N."/>
            <person name="Holroyd S."/>
            <person name="Jagels K."/>
            <person name="Moule S."/>
            <person name="Quail M.A."/>
            <person name="Rabbinowitsch E."/>
            <person name="Rutherford K.M."/>
            <person name="Thomson N.R."/>
            <person name="Unwin L."/>
            <person name="Whitehead S."/>
            <person name="Barrell B.G."/>
            <person name="Parkhill J."/>
        </authorList>
    </citation>
    <scope>NUCLEOTIDE SEQUENCE [LARGE SCALE GENOMIC DNA]</scope>
    <source>
        <strain>ATCC 700971 / NCTC 13129 / Biotype gravis</strain>
    </source>
</reference>
<sequence length="160" mass="16586">MTNTPIIPRVGIATDAHQIEAGKPCWIACLLFSGADGCEGHSDGDVVAHALVDALLSAANLGDLGSFVGVGRKEYDGVSGTQLLTECRELLESHGFTIGNGAVQLVGQSPKMGPRREEAERVMSEILGAPVSVSATTTDHLGFTGRSEGRAAVATAVVWK</sequence>
<name>ISPF_CORDI</name>
<protein>
    <recommendedName>
        <fullName evidence="1">2-C-methyl-D-erythritol 2,4-cyclodiphosphate synthase</fullName>
        <shortName evidence="1">MECDP-synthase</shortName>
        <shortName evidence="1">MECPP-synthase</shortName>
        <shortName evidence="1">MECPS</shortName>
        <ecNumber evidence="1">4.6.1.12</ecNumber>
    </recommendedName>
</protein>
<comment type="function">
    <text evidence="1">Involved in the biosynthesis of isopentenyl diphosphate (IPP) and dimethylallyl diphosphate (DMAPP), two major building blocks of isoprenoid compounds. Catalyzes the conversion of 4-diphosphocytidyl-2-C-methyl-D-erythritol 2-phosphate (CDP-ME2P) to 2-C-methyl-D-erythritol 2,4-cyclodiphosphate (ME-CPP) with a corresponding release of cytidine 5-monophosphate (CMP).</text>
</comment>
<comment type="catalytic activity">
    <reaction evidence="1">
        <text>4-CDP-2-C-methyl-D-erythritol 2-phosphate = 2-C-methyl-D-erythritol 2,4-cyclic diphosphate + CMP</text>
        <dbReference type="Rhea" id="RHEA:23864"/>
        <dbReference type="ChEBI" id="CHEBI:57919"/>
        <dbReference type="ChEBI" id="CHEBI:58483"/>
        <dbReference type="ChEBI" id="CHEBI:60377"/>
        <dbReference type="EC" id="4.6.1.12"/>
    </reaction>
</comment>
<comment type="cofactor">
    <cofactor evidence="1">
        <name>a divalent metal cation</name>
        <dbReference type="ChEBI" id="CHEBI:60240"/>
    </cofactor>
    <text evidence="1">Binds 1 divalent metal cation per subunit.</text>
</comment>
<comment type="pathway">
    <text evidence="1">Isoprenoid biosynthesis; isopentenyl diphosphate biosynthesis via DXP pathway; isopentenyl diphosphate from 1-deoxy-D-xylulose 5-phosphate: step 4/6.</text>
</comment>
<comment type="subunit">
    <text evidence="1">Homotrimer.</text>
</comment>
<comment type="similarity">
    <text evidence="1">Belongs to the IspF family.</text>
</comment>
<keyword id="KW-0414">Isoprene biosynthesis</keyword>
<keyword id="KW-0456">Lyase</keyword>
<keyword id="KW-0479">Metal-binding</keyword>
<keyword id="KW-1185">Reference proteome</keyword>
<proteinExistence type="inferred from homology"/>